<keyword id="KW-0963">Cytoplasm</keyword>
<keyword id="KW-0489">Methyltransferase</keyword>
<keyword id="KW-1185">Reference proteome</keyword>
<keyword id="KW-0694">RNA-binding</keyword>
<keyword id="KW-0698">rRNA processing</keyword>
<keyword id="KW-0949">S-adenosyl-L-methionine</keyword>
<keyword id="KW-0808">Transferase</keyword>
<comment type="function">
    <text evidence="1">Specifically dimethylates two adjacent adenosines (A1518 and A1519) in the loop of a conserved hairpin near the 3'-end of 16S rRNA in the 30S particle. May play a critical role in biogenesis of 30S subunits.</text>
</comment>
<comment type="catalytic activity">
    <reaction evidence="1">
        <text>adenosine(1518)/adenosine(1519) in 16S rRNA + 4 S-adenosyl-L-methionine = N(6)-dimethyladenosine(1518)/N(6)-dimethyladenosine(1519) in 16S rRNA + 4 S-adenosyl-L-homocysteine + 4 H(+)</text>
        <dbReference type="Rhea" id="RHEA:19609"/>
        <dbReference type="Rhea" id="RHEA-COMP:10232"/>
        <dbReference type="Rhea" id="RHEA-COMP:10233"/>
        <dbReference type="ChEBI" id="CHEBI:15378"/>
        <dbReference type="ChEBI" id="CHEBI:57856"/>
        <dbReference type="ChEBI" id="CHEBI:59789"/>
        <dbReference type="ChEBI" id="CHEBI:74411"/>
        <dbReference type="ChEBI" id="CHEBI:74493"/>
        <dbReference type="EC" id="2.1.1.182"/>
    </reaction>
</comment>
<comment type="subcellular location">
    <subcellularLocation>
        <location evidence="1">Cytoplasm</location>
    </subcellularLocation>
</comment>
<comment type="similarity">
    <text evidence="1">Belongs to the class I-like SAM-binding methyltransferase superfamily. rRNA adenine N(6)-methyltransferase family. RsmA subfamily.</text>
</comment>
<organism>
    <name type="scientific">Acidobacterium capsulatum (strain ATCC 51196 / DSM 11244 / BCRC 80197 / JCM 7670 / NBRC 15755 / NCIMB 13165 / 161)</name>
    <dbReference type="NCBI Taxonomy" id="240015"/>
    <lineage>
        <taxon>Bacteria</taxon>
        <taxon>Pseudomonadati</taxon>
        <taxon>Acidobacteriota</taxon>
        <taxon>Terriglobia</taxon>
        <taxon>Terriglobales</taxon>
        <taxon>Acidobacteriaceae</taxon>
        <taxon>Acidobacterium</taxon>
    </lineage>
</organism>
<reference key="1">
    <citation type="journal article" date="2009" name="Appl. Environ. Microbiol.">
        <title>Three genomes from the phylum Acidobacteria provide insight into the lifestyles of these microorganisms in soils.</title>
        <authorList>
            <person name="Ward N.L."/>
            <person name="Challacombe J.F."/>
            <person name="Janssen P.H."/>
            <person name="Henrissat B."/>
            <person name="Coutinho P.M."/>
            <person name="Wu M."/>
            <person name="Xie G."/>
            <person name="Haft D.H."/>
            <person name="Sait M."/>
            <person name="Badger J."/>
            <person name="Barabote R.D."/>
            <person name="Bradley B."/>
            <person name="Brettin T.S."/>
            <person name="Brinkac L.M."/>
            <person name="Bruce D."/>
            <person name="Creasy T."/>
            <person name="Daugherty S.C."/>
            <person name="Davidsen T.M."/>
            <person name="DeBoy R.T."/>
            <person name="Detter J.C."/>
            <person name="Dodson R.J."/>
            <person name="Durkin A.S."/>
            <person name="Ganapathy A."/>
            <person name="Gwinn-Giglio M."/>
            <person name="Han C.S."/>
            <person name="Khouri H."/>
            <person name="Kiss H."/>
            <person name="Kothari S.P."/>
            <person name="Madupu R."/>
            <person name="Nelson K.E."/>
            <person name="Nelson W.C."/>
            <person name="Paulsen I."/>
            <person name="Penn K."/>
            <person name="Ren Q."/>
            <person name="Rosovitz M.J."/>
            <person name="Selengut J.D."/>
            <person name="Shrivastava S."/>
            <person name="Sullivan S.A."/>
            <person name="Tapia R."/>
            <person name="Thompson L.S."/>
            <person name="Watkins K.L."/>
            <person name="Yang Q."/>
            <person name="Yu C."/>
            <person name="Zafar N."/>
            <person name="Zhou L."/>
            <person name="Kuske C.R."/>
        </authorList>
    </citation>
    <scope>NUCLEOTIDE SEQUENCE [LARGE SCALE GENOMIC DNA]</scope>
    <source>
        <strain>ATCC 51196 / DSM 11244 / BCRC 80197 / JCM 7670 / NBRC 15755 / NCIMB 13165 / 161</strain>
    </source>
</reference>
<protein>
    <recommendedName>
        <fullName evidence="1">Ribosomal RNA small subunit methyltransferase A</fullName>
        <ecNumber evidence="1">2.1.1.182</ecNumber>
    </recommendedName>
    <alternativeName>
        <fullName evidence="1">16S rRNA (adenine(1518)-N(6)/adenine(1519)-N(6))-dimethyltransferase</fullName>
    </alternativeName>
    <alternativeName>
        <fullName evidence="1">16S rRNA dimethyladenosine transferase</fullName>
    </alternativeName>
    <alternativeName>
        <fullName evidence="1">16S rRNA dimethylase</fullName>
    </alternativeName>
    <alternativeName>
        <fullName evidence="1">S-adenosylmethionine-6-N', N'-adenosyl(rRNA) dimethyltransferase</fullName>
    </alternativeName>
</protein>
<proteinExistence type="inferred from homology"/>
<sequence>MRGGWGRFPPKSREVAAISGKHKPKLGQNFLVSEAACRSIVEALGNLGARTVVEIGPGKGAITELLANRAERLIAIELDRELAPRLRERFARRETVTVIEDDVLRVDLSALARPGEKLLVVGNLPYYMTSEILLHLIRHEAAIERAVVMVQREVADRVAAGPGSRDYGLLSVTAQLHARVEKLLTLPPGAFSPPPEVYSTVLRWTMHSRTDELGVDPTRFTGFLRSCFAQKRKTLGNNLRAAKYEPAAIAGAMQSAGVAAGVRAEELSLEALAALWRTLEDRS</sequence>
<evidence type="ECO:0000255" key="1">
    <source>
        <dbReference type="HAMAP-Rule" id="MF_00607"/>
    </source>
</evidence>
<name>RSMA_ACIC5</name>
<accession>C1F127</accession>
<feature type="chain" id="PRO_1000212236" description="Ribosomal RNA small subunit methyltransferase A">
    <location>
        <begin position="1"/>
        <end position="283"/>
    </location>
</feature>
<feature type="binding site" evidence="1">
    <location>
        <position position="29"/>
    </location>
    <ligand>
        <name>S-adenosyl-L-methionine</name>
        <dbReference type="ChEBI" id="CHEBI:59789"/>
    </ligand>
</feature>
<feature type="binding site" evidence="1">
    <location>
        <position position="31"/>
    </location>
    <ligand>
        <name>S-adenosyl-L-methionine</name>
        <dbReference type="ChEBI" id="CHEBI:59789"/>
    </ligand>
</feature>
<feature type="binding site" evidence="1">
    <location>
        <position position="56"/>
    </location>
    <ligand>
        <name>S-adenosyl-L-methionine</name>
        <dbReference type="ChEBI" id="CHEBI:59789"/>
    </ligand>
</feature>
<feature type="binding site" evidence="1">
    <location>
        <position position="77"/>
    </location>
    <ligand>
        <name>S-adenosyl-L-methionine</name>
        <dbReference type="ChEBI" id="CHEBI:59789"/>
    </ligand>
</feature>
<feature type="binding site" evidence="1">
    <location>
        <position position="102"/>
    </location>
    <ligand>
        <name>S-adenosyl-L-methionine</name>
        <dbReference type="ChEBI" id="CHEBI:59789"/>
    </ligand>
</feature>
<feature type="binding site" evidence="1">
    <location>
        <position position="123"/>
    </location>
    <ligand>
        <name>S-adenosyl-L-methionine</name>
        <dbReference type="ChEBI" id="CHEBI:59789"/>
    </ligand>
</feature>
<dbReference type="EC" id="2.1.1.182" evidence="1"/>
<dbReference type="EMBL" id="CP001472">
    <property type="protein sequence ID" value="ACO32855.1"/>
    <property type="molecule type" value="Genomic_DNA"/>
</dbReference>
<dbReference type="RefSeq" id="WP_012680918.1">
    <property type="nucleotide sequence ID" value="NC_012483.1"/>
</dbReference>
<dbReference type="SMR" id="C1F127"/>
<dbReference type="FunCoup" id="C1F127">
    <property type="interactions" value="496"/>
</dbReference>
<dbReference type="STRING" id="240015.ACP_0528"/>
<dbReference type="KEGG" id="aca:ACP_0528"/>
<dbReference type="eggNOG" id="COG0030">
    <property type="taxonomic scope" value="Bacteria"/>
</dbReference>
<dbReference type="HOGENOM" id="CLU_041220_0_1_0"/>
<dbReference type="InParanoid" id="C1F127"/>
<dbReference type="OrthoDB" id="9814755at2"/>
<dbReference type="Proteomes" id="UP000002207">
    <property type="component" value="Chromosome"/>
</dbReference>
<dbReference type="GO" id="GO:0005829">
    <property type="term" value="C:cytosol"/>
    <property type="evidence" value="ECO:0007669"/>
    <property type="project" value="TreeGrafter"/>
</dbReference>
<dbReference type="GO" id="GO:0052908">
    <property type="term" value="F:16S rRNA (adenine(1518)-N(6)/adenine(1519)-N(6))-dimethyltransferase activity"/>
    <property type="evidence" value="ECO:0007669"/>
    <property type="project" value="UniProtKB-EC"/>
</dbReference>
<dbReference type="GO" id="GO:0003723">
    <property type="term" value="F:RNA binding"/>
    <property type="evidence" value="ECO:0007669"/>
    <property type="project" value="UniProtKB-KW"/>
</dbReference>
<dbReference type="CDD" id="cd02440">
    <property type="entry name" value="AdoMet_MTases"/>
    <property type="match status" value="1"/>
</dbReference>
<dbReference type="Gene3D" id="1.10.8.100">
    <property type="entry name" value="Ribosomal RNA adenine dimethylase-like, domain 2"/>
    <property type="match status" value="1"/>
</dbReference>
<dbReference type="Gene3D" id="3.40.50.150">
    <property type="entry name" value="Vaccinia Virus protein VP39"/>
    <property type="match status" value="1"/>
</dbReference>
<dbReference type="HAMAP" id="MF_00607">
    <property type="entry name" value="16SrRNA_methyltr_A"/>
    <property type="match status" value="1"/>
</dbReference>
<dbReference type="InterPro" id="IPR001737">
    <property type="entry name" value="KsgA/Erm"/>
</dbReference>
<dbReference type="InterPro" id="IPR023165">
    <property type="entry name" value="rRNA_Ade_diMease-like_C"/>
</dbReference>
<dbReference type="InterPro" id="IPR020596">
    <property type="entry name" value="rRNA_Ade_Mease_Trfase_CS"/>
</dbReference>
<dbReference type="InterPro" id="IPR020598">
    <property type="entry name" value="rRNA_Ade_methylase_Trfase_N"/>
</dbReference>
<dbReference type="InterPro" id="IPR011530">
    <property type="entry name" value="rRNA_adenine_dimethylase"/>
</dbReference>
<dbReference type="InterPro" id="IPR029063">
    <property type="entry name" value="SAM-dependent_MTases_sf"/>
</dbReference>
<dbReference type="NCBIfam" id="TIGR00755">
    <property type="entry name" value="ksgA"/>
    <property type="match status" value="1"/>
</dbReference>
<dbReference type="PANTHER" id="PTHR11727">
    <property type="entry name" value="DIMETHYLADENOSINE TRANSFERASE"/>
    <property type="match status" value="1"/>
</dbReference>
<dbReference type="PANTHER" id="PTHR11727:SF7">
    <property type="entry name" value="DIMETHYLADENOSINE TRANSFERASE-RELATED"/>
    <property type="match status" value="1"/>
</dbReference>
<dbReference type="Pfam" id="PF00398">
    <property type="entry name" value="RrnaAD"/>
    <property type="match status" value="1"/>
</dbReference>
<dbReference type="SMART" id="SM00650">
    <property type="entry name" value="rADc"/>
    <property type="match status" value="1"/>
</dbReference>
<dbReference type="SUPFAM" id="SSF53335">
    <property type="entry name" value="S-adenosyl-L-methionine-dependent methyltransferases"/>
    <property type="match status" value="1"/>
</dbReference>
<dbReference type="PROSITE" id="PS01131">
    <property type="entry name" value="RRNA_A_DIMETH"/>
    <property type="match status" value="1"/>
</dbReference>
<dbReference type="PROSITE" id="PS51689">
    <property type="entry name" value="SAM_RNA_A_N6_MT"/>
    <property type="match status" value="1"/>
</dbReference>
<gene>
    <name evidence="1" type="primary">rsmA</name>
    <name evidence="1" type="synonym">ksgA</name>
    <name type="ordered locus">ACP_0528</name>
</gene>